<keyword id="KW-0072">Autophagy</keyword>
<keyword id="KW-0472">Membrane</keyword>
<keyword id="KW-0496">Mitochondrion</keyword>
<keyword id="KW-1000">Mitochondrion outer membrane</keyword>
<keyword id="KW-0597">Phosphoprotein</keyword>
<keyword id="KW-0812">Transmembrane</keyword>
<keyword id="KW-1133">Transmembrane helix</keyword>
<keyword id="KW-0926">Vacuole</keyword>
<dbReference type="EMBL" id="ABSV01001176">
    <property type="protein sequence ID" value="EDZ71580.1"/>
    <property type="molecule type" value="Genomic_DNA"/>
</dbReference>
<dbReference type="SMR" id="B5VKG3"/>
<dbReference type="Proteomes" id="UP000008988">
    <property type="component" value="Unassembled WGS sequence"/>
</dbReference>
<dbReference type="GO" id="GO:0005741">
    <property type="term" value="C:mitochondrial outer membrane"/>
    <property type="evidence" value="ECO:0007669"/>
    <property type="project" value="UniProtKB-SubCell"/>
</dbReference>
<dbReference type="GO" id="GO:0034045">
    <property type="term" value="C:phagophore assembly site membrane"/>
    <property type="evidence" value="ECO:0007669"/>
    <property type="project" value="UniProtKB-SubCell"/>
</dbReference>
<dbReference type="GO" id="GO:0005774">
    <property type="term" value="C:vacuolar membrane"/>
    <property type="evidence" value="ECO:0007669"/>
    <property type="project" value="UniProtKB-SubCell"/>
</dbReference>
<dbReference type="GO" id="GO:0006914">
    <property type="term" value="P:autophagy"/>
    <property type="evidence" value="ECO:0007669"/>
    <property type="project" value="UniProtKB-KW"/>
</dbReference>
<dbReference type="CDD" id="cd19929">
    <property type="entry name" value="psREC_Atg32"/>
    <property type="match status" value="1"/>
</dbReference>
<protein>
    <recommendedName>
        <fullName>Autophagy-related protein 32</fullName>
    </recommendedName>
    <alternativeName>
        <fullName>Extracellular mutant protein 37</fullName>
    </alternativeName>
</protein>
<accession>B5VKG3</accession>
<feature type="chain" id="PRO_0000399762" description="Autophagy-related protein 32">
    <location>
        <begin position="1"/>
        <end position="529"/>
    </location>
</feature>
<feature type="transmembrane region" description="Helical" evidence="3">
    <location>
        <begin position="389"/>
        <end position="411"/>
    </location>
</feature>
<feature type="region of interest" description="Disordered" evidence="4">
    <location>
        <begin position="1"/>
        <end position="41"/>
    </location>
</feature>
<feature type="region of interest" description="Disordered" evidence="4">
    <location>
        <begin position="345"/>
        <end position="381"/>
    </location>
</feature>
<feature type="compositionally biased region" description="Basic and acidic residues" evidence="4">
    <location>
        <begin position="1"/>
        <end position="11"/>
    </location>
</feature>
<feature type="compositionally biased region" description="Low complexity" evidence="4">
    <location>
        <begin position="12"/>
        <end position="24"/>
    </location>
</feature>
<feature type="compositionally biased region" description="Polar residues" evidence="4">
    <location>
        <begin position="25"/>
        <end position="34"/>
    </location>
</feature>
<feature type="compositionally biased region" description="Basic residues" evidence="4">
    <location>
        <begin position="370"/>
        <end position="381"/>
    </location>
</feature>
<feature type="modified residue" description="Phosphoserine" evidence="2">
    <location>
        <position position="114"/>
    </location>
</feature>
<feature type="modified residue" description="Phosphoserine" evidence="2">
    <location>
        <position position="119"/>
    </location>
</feature>
<reference key="1">
    <citation type="journal article" date="2008" name="FEMS Yeast Res.">
        <title>Comparative genome analysis of a Saccharomyces cerevisiae wine strain.</title>
        <authorList>
            <person name="Borneman A.R."/>
            <person name="Forgan A.H."/>
            <person name="Pretorius I.S."/>
            <person name="Chambers P.J."/>
        </authorList>
    </citation>
    <scope>NUCLEOTIDE SEQUENCE [LARGE SCALE GENOMIC DNA]</scope>
    <source>
        <strain>AWRI1631</strain>
    </source>
</reference>
<gene>
    <name type="primary">ATG32</name>
    <name type="synonym">ECM17</name>
    <name type="ORF">AWRI1631_90220</name>
</gene>
<evidence type="ECO:0000250" key="1"/>
<evidence type="ECO:0000250" key="2">
    <source>
        <dbReference type="UniProtKB" id="P40458"/>
    </source>
</evidence>
<evidence type="ECO:0000255" key="3"/>
<evidence type="ECO:0000256" key="4">
    <source>
        <dbReference type="SAM" id="MobiDB-lite"/>
    </source>
</evidence>
<evidence type="ECO:0000305" key="5"/>
<organism>
    <name type="scientific">Saccharomyces cerevisiae (strain AWRI1631)</name>
    <name type="common">Baker's yeast</name>
    <dbReference type="NCBI Taxonomy" id="545124"/>
    <lineage>
        <taxon>Eukaryota</taxon>
        <taxon>Fungi</taxon>
        <taxon>Dikarya</taxon>
        <taxon>Ascomycota</taxon>
        <taxon>Saccharomycotina</taxon>
        <taxon>Saccharomycetes</taxon>
        <taxon>Saccharomycetales</taxon>
        <taxon>Saccharomycetaceae</taxon>
        <taxon>Saccharomyces</taxon>
    </lineage>
</organism>
<proteinExistence type="inferred from homology"/>
<comment type="function">
    <text evidence="1">Mitophagy-specific receptor that recruits the autophagic machinery to mitochondria and regulates selective degradation of mitochondria. Mitophagy contributes to regulate mitochondrial quantity and quality by eliminating the mitochondria to a basal level to fulfill cellular energy requirements and preventing excess ROS production. Recruits ATG11 to the surface of mitochondria. Also promotes autophagy-dependent peroxisome degradation (By similarity).</text>
</comment>
<comment type="subunit">
    <text evidence="1">interacts with ATG8 and ATG11.</text>
</comment>
<comment type="subcellular location">
    <subcellularLocation>
        <location evidence="1">Mitochondrion outer membrane</location>
        <topology evidence="1">Single-pass membrane protein</topology>
    </subcellularLocation>
    <subcellularLocation>
        <location evidence="1">Vacuole membrane</location>
        <topology evidence="1">Single-pass membrane protein</topology>
    </subcellularLocation>
    <subcellularLocation>
        <location evidence="1">Preautophagosomal structure membrane</location>
        <topology evidence="1">Single-pass membrane protein</topology>
    </subcellularLocation>
    <text evidence="1">Is recruited to the preautophagosomal structure during mitophagy and imported into the vacuole along with mitochondria during starvation.</text>
</comment>
<comment type="PTM">
    <text evidence="1">Phosphorylation of Ser-114 and Ser-119 are critically important for mitophagy and for the ATG11-ATG32 interaction. Phosphorylation depends on both HOG1 and PBS2.</text>
</comment>
<comment type="similarity">
    <text evidence="5">Belongs to the ATG32 family.</text>
</comment>
<sequence length="529" mass="58969">MVLEYQQREGKGSSSKSMPPDSSSTTIHTCSEAQTGEDKGLLDPHLSVLELLSKTGHSPSPMGQNLVTSIDISGNHNVNDSISGSWQAIQPLDLGASFIPERCSSQTTNGSILSSSDTSEEEQELLQAPAADIINIIKQGQEGANVVSPSHPFKQLQKIISLPLPGKEKTPFNEQDDDGDEDEAFEEDSVTITKSLTSSTNSFVMPKLSLTQKNPVFRLLILGRTGSSFYQSIPKEYQSLFELPKYHDSATFPQYTGIVIIFQELREMVSLLNRIVQYSQGKPVIPICQPGQVIQVKNVLKSFLRNKLVKLLFPPVVVTNKRDLKKMFQRLQDLSLEYGEDVNEEDNDDEAIHTKSRSYCRNKKAENSKKKSPKSNKKPKRKKQKFFTSWFTWGISITIGISFGCCVTYFVTAAYEHQTVKSLSLRPSILASLLSLDSSSDTINTPATASPSSTEQFLWFDKGTLQINFHSDGFIMKSLTIIKETWGKMNTFVLHALSKPLKFLENLNKSSEFSIDESNRILALGYILL</sequence>
<name>ATG32_YEAS6</name>